<dbReference type="EMBL" id="AJ854042">
    <property type="protein sequence ID" value="CAH69425.1"/>
    <property type="molecule type" value="Genomic_DNA"/>
</dbReference>
<dbReference type="RefSeq" id="YP_001496963.1">
    <property type="nucleotide sequence ID" value="NC_009884.1"/>
</dbReference>
<dbReference type="KEGG" id="vg:5656081"/>
<dbReference type="Proteomes" id="UP000006364">
    <property type="component" value="Genome"/>
</dbReference>
<feature type="chain" id="PRO_0000384495" description="Uncharacterized protein ORF90">
    <location>
        <begin position="1"/>
        <end position="80"/>
    </location>
</feature>
<keyword id="KW-1185">Reference proteome</keyword>
<proteinExistence type="predicted"/>
<sequence length="80" mass="9265">MGLTGLGKIVSQIIRQIAHGLEYVGDKVSHYIRLALHYLYEFAKAFYHYLGKLYDTFQRDPIRFLQFAGSLAIMTYYGVL</sequence>
<organismHost>
    <name type="scientific">Acidianus sp. F28</name>
    <dbReference type="NCBI Taxonomy" id="315458"/>
</organismHost>
<protein>
    <recommendedName>
        <fullName>Uncharacterized protein ORF90</fullName>
    </recommendedName>
</protein>
<reference key="1">
    <citation type="journal article" date="2005" name="J. Bacteriol.">
        <title>Structure and genome organization of AFV2, a novel archaeal lipothrixvirus with unusual terminal and core structures.</title>
        <authorList>
            <person name="Haring M."/>
            <person name="Vestergaard G."/>
            <person name="Brugger K."/>
            <person name="Rachel R."/>
            <person name="Garrett R.A."/>
            <person name="Prangishvili D."/>
        </authorList>
    </citation>
    <scope>NUCLEOTIDE SEQUENCE [GENOMIC DNA]</scope>
</reference>
<gene>
    <name type="ORF">ORF90</name>
</gene>
<name>Y090_AFV2P</name>
<organism>
    <name type="scientific">Acidianus filamentous virus 2 (isolate Italy/Pozzuoli)</name>
    <name type="common">AFV-2</name>
    <dbReference type="NCBI Taxonomy" id="654910"/>
    <lineage>
        <taxon>Viruses</taxon>
        <taxon>Adnaviria</taxon>
        <taxon>Zilligvirae</taxon>
        <taxon>Taleaviricota</taxon>
        <taxon>Tokiviricetes</taxon>
        <taxon>Ligamenvirales</taxon>
        <taxon>Lipothrixviridae</taxon>
        <taxon>Deltalipothrixvirus</taxon>
        <taxon>Acidianus filamentous virus 2</taxon>
    </lineage>
</organism>
<accession>Q573D1</accession>